<reference key="1">
    <citation type="submission" date="2006-12" db="EMBL/GenBank/DDBJ databases">
        <title>Complete sequence of chromosome 1 of Paracoccus denitrificans PD1222.</title>
        <authorList>
            <person name="Copeland A."/>
            <person name="Lucas S."/>
            <person name="Lapidus A."/>
            <person name="Barry K."/>
            <person name="Detter J.C."/>
            <person name="Glavina del Rio T."/>
            <person name="Hammon N."/>
            <person name="Israni S."/>
            <person name="Dalin E."/>
            <person name="Tice H."/>
            <person name="Pitluck S."/>
            <person name="Munk A.C."/>
            <person name="Brettin T."/>
            <person name="Bruce D."/>
            <person name="Han C."/>
            <person name="Tapia R."/>
            <person name="Gilna P."/>
            <person name="Schmutz J."/>
            <person name="Larimer F."/>
            <person name="Land M."/>
            <person name="Hauser L."/>
            <person name="Kyrpides N."/>
            <person name="Lykidis A."/>
            <person name="Spiro S."/>
            <person name="Richardson D.J."/>
            <person name="Moir J.W.B."/>
            <person name="Ferguson S.J."/>
            <person name="van Spanning R.J.M."/>
            <person name="Richardson P."/>
        </authorList>
    </citation>
    <scope>NUCLEOTIDE SEQUENCE [LARGE SCALE GENOMIC DNA]</scope>
    <source>
        <strain>Pd 1222</strain>
    </source>
</reference>
<comment type="function">
    <text evidence="1">Functions in the N-end rule pathway of protein degradation where it conjugates Leu, Phe and, less efficiently, Met from aminoacyl-tRNAs to the N-termini of proteins containing an N-terminal arginine or lysine.</text>
</comment>
<comment type="catalytic activity">
    <reaction evidence="1">
        <text>N-terminal L-lysyl-[protein] + L-leucyl-tRNA(Leu) = N-terminal L-leucyl-L-lysyl-[protein] + tRNA(Leu) + H(+)</text>
        <dbReference type="Rhea" id="RHEA:12340"/>
        <dbReference type="Rhea" id="RHEA-COMP:9613"/>
        <dbReference type="Rhea" id="RHEA-COMP:9622"/>
        <dbReference type="Rhea" id="RHEA-COMP:12670"/>
        <dbReference type="Rhea" id="RHEA-COMP:12671"/>
        <dbReference type="ChEBI" id="CHEBI:15378"/>
        <dbReference type="ChEBI" id="CHEBI:65249"/>
        <dbReference type="ChEBI" id="CHEBI:78442"/>
        <dbReference type="ChEBI" id="CHEBI:78494"/>
        <dbReference type="ChEBI" id="CHEBI:133043"/>
        <dbReference type="EC" id="2.3.2.6"/>
    </reaction>
</comment>
<comment type="catalytic activity">
    <reaction evidence="1">
        <text>N-terminal L-arginyl-[protein] + L-leucyl-tRNA(Leu) = N-terminal L-leucyl-L-arginyl-[protein] + tRNA(Leu) + H(+)</text>
        <dbReference type="Rhea" id="RHEA:50416"/>
        <dbReference type="Rhea" id="RHEA-COMP:9613"/>
        <dbReference type="Rhea" id="RHEA-COMP:9622"/>
        <dbReference type="Rhea" id="RHEA-COMP:12672"/>
        <dbReference type="Rhea" id="RHEA-COMP:12673"/>
        <dbReference type="ChEBI" id="CHEBI:15378"/>
        <dbReference type="ChEBI" id="CHEBI:64719"/>
        <dbReference type="ChEBI" id="CHEBI:78442"/>
        <dbReference type="ChEBI" id="CHEBI:78494"/>
        <dbReference type="ChEBI" id="CHEBI:133044"/>
        <dbReference type="EC" id="2.3.2.6"/>
    </reaction>
</comment>
<comment type="catalytic activity">
    <reaction evidence="1">
        <text>L-phenylalanyl-tRNA(Phe) + an N-terminal L-alpha-aminoacyl-[protein] = an N-terminal L-phenylalanyl-L-alpha-aminoacyl-[protein] + tRNA(Phe)</text>
        <dbReference type="Rhea" id="RHEA:43632"/>
        <dbReference type="Rhea" id="RHEA-COMP:9668"/>
        <dbReference type="Rhea" id="RHEA-COMP:9699"/>
        <dbReference type="Rhea" id="RHEA-COMP:10636"/>
        <dbReference type="Rhea" id="RHEA-COMP:10637"/>
        <dbReference type="ChEBI" id="CHEBI:78442"/>
        <dbReference type="ChEBI" id="CHEBI:78531"/>
        <dbReference type="ChEBI" id="CHEBI:78597"/>
        <dbReference type="ChEBI" id="CHEBI:83561"/>
        <dbReference type="EC" id="2.3.2.6"/>
    </reaction>
</comment>
<comment type="subcellular location">
    <subcellularLocation>
        <location evidence="1">Cytoplasm</location>
    </subcellularLocation>
</comment>
<comment type="similarity">
    <text evidence="1">Belongs to the L/F-transferase family.</text>
</comment>
<evidence type="ECO:0000255" key="1">
    <source>
        <dbReference type="HAMAP-Rule" id="MF_00688"/>
    </source>
</evidence>
<sequence>MSGGLTAERMLAAYAQGVFPMAESASAAQLYWFEPALRGILPVGGVHVSRSMRRFLRHCDWRATIDNDFAGVVAGCADREETWINAPLLALYQDLFRMGHAHSLEIRAGEDLIGGMFGLTLGGAFFAESMFSRRSNASKAALIWMSSHLARCGFTLWDTQYPNPHLASMGGRAIPRLEYRRRLAAALRIPADFTAHALPDVQALLQEITQTS</sequence>
<name>LFTR_PARDP</name>
<accession>A1B1I1</accession>
<protein>
    <recommendedName>
        <fullName evidence="1">Leucyl/phenylalanyl-tRNA--protein transferase</fullName>
        <ecNumber evidence="1">2.3.2.6</ecNumber>
    </recommendedName>
    <alternativeName>
        <fullName evidence="1">L/F-transferase</fullName>
    </alternativeName>
    <alternativeName>
        <fullName evidence="1">Leucyltransferase</fullName>
    </alternativeName>
    <alternativeName>
        <fullName evidence="1">Phenyalanyltransferase</fullName>
    </alternativeName>
</protein>
<proteinExistence type="inferred from homology"/>
<organism>
    <name type="scientific">Paracoccus denitrificans (strain Pd 1222)</name>
    <dbReference type="NCBI Taxonomy" id="318586"/>
    <lineage>
        <taxon>Bacteria</taxon>
        <taxon>Pseudomonadati</taxon>
        <taxon>Pseudomonadota</taxon>
        <taxon>Alphaproteobacteria</taxon>
        <taxon>Rhodobacterales</taxon>
        <taxon>Paracoccaceae</taxon>
        <taxon>Paracoccus</taxon>
    </lineage>
</organism>
<keyword id="KW-0012">Acyltransferase</keyword>
<keyword id="KW-0963">Cytoplasm</keyword>
<keyword id="KW-1185">Reference proteome</keyword>
<keyword id="KW-0808">Transferase</keyword>
<dbReference type="EC" id="2.3.2.6" evidence="1"/>
<dbReference type="EMBL" id="CP000489">
    <property type="protein sequence ID" value="ABL69375.1"/>
    <property type="molecule type" value="Genomic_DNA"/>
</dbReference>
<dbReference type="RefSeq" id="WP_011747593.1">
    <property type="nucleotide sequence ID" value="NC_008686.1"/>
</dbReference>
<dbReference type="SMR" id="A1B1I1"/>
<dbReference type="STRING" id="318586.Pden_1270"/>
<dbReference type="EnsemblBacteria" id="ABL69375">
    <property type="protein sequence ID" value="ABL69375"/>
    <property type="gene ID" value="Pden_1270"/>
</dbReference>
<dbReference type="GeneID" id="93452483"/>
<dbReference type="KEGG" id="pde:Pden_1270"/>
<dbReference type="eggNOG" id="COG2360">
    <property type="taxonomic scope" value="Bacteria"/>
</dbReference>
<dbReference type="HOGENOM" id="CLU_075045_1_1_5"/>
<dbReference type="OrthoDB" id="9790282at2"/>
<dbReference type="Proteomes" id="UP000000361">
    <property type="component" value="Chromosome 1"/>
</dbReference>
<dbReference type="GO" id="GO:0005737">
    <property type="term" value="C:cytoplasm"/>
    <property type="evidence" value="ECO:0007669"/>
    <property type="project" value="UniProtKB-SubCell"/>
</dbReference>
<dbReference type="GO" id="GO:0008914">
    <property type="term" value="F:leucyl-tRNA--protein transferase activity"/>
    <property type="evidence" value="ECO:0007669"/>
    <property type="project" value="UniProtKB-UniRule"/>
</dbReference>
<dbReference type="GO" id="GO:0030163">
    <property type="term" value="P:protein catabolic process"/>
    <property type="evidence" value="ECO:0007669"/>
    <property type="project" value="UniProtKB-UniRule"/>
</dbReference>
<dbReference type="Gene3D" id="3.40.630.70">
    <property type="entry name" value="Leucyl/phenylalanyl-tRNA-protein transferase, C-terminal domain"/>
    <property type="match status" value="1"/>
</dbReference>
<dbReference type="Gene3D" id="3.30.70.3550">
    <property type="entry name" value="Leucyl/phenylalanyl-tRNA-protein transferase, N-terminal domain"/>
    <property type="match status" value="1"/>
</dbReference>
<dbReference type="HAMAP" id="MF_00688">
    <property type="entry name" value="Leu_Phe_trans"/>
    <property type="match status" value="1"/>
</dbReference>
<dbReference type="InterPro" id="IPR016181">
    <property type="entry name" value="Acyl_CoA_acyltransferase"/>
</dbReference>
<dbReference type="InterPro" id="IPR004616">
    <property type="entry name" value="Leu/Phe-tRNA_Trfase"/>
</dbReference>
<dbReference type="InterPro" id="IPR042203">
    <property type="entry name" value="Leu/Phe-tRNA_Trfase_C"/>
</dbReference>
<dbReference type="InterPro" id="IPR042221">
    <property type="entry name" value="Leu/Phe-tRNA_Trfase_N"/>
</dbReference>
<dbReference type="NCBIfam" id="TIGR00667">
    <property type="entry name" value="aat"/>
    <property type="match status" value="1"/>
</dbReference>
<dbReference type="PANTHER" id="PTHR30098">
    <property type="entry name" value="LEUCYL/PHENYLALANYL-TRNA--PROTEIN TRANSFERASE"/>
    <property type="match status" value="1"/>
</dbReference>
<dbReference type="PANTHER" id="PTHR30098:SF2">
    <property type="entry name" value="LEUCYL_PHENYLALANYL-TRNA--PROTEIN TRANSFERASE"/>
    <property type="match status" value="1"/>
</dbReference>
<dbReference type="Pfam" id="PF03588">
    <property type="entry name" value="Leu_Phe_trans"/>
    <property type="match status" value="1"/>
</dbReference>
<dbReference type="SUPFAM" id="SSF55729">
    <property type="entry name" value="Acyl-CoA N-acyltransferases (Nat)"/>
    <property type="match status" value="1"/>
</dbReference>
<feature type="chain" id="PRO_0000304346" description="Leucyl/phenylalanyl-tRNA--protein transferase">
    <location>
        <begin position="1"/>
        <end position="212"/>
    </location>
</feature>
<gene>
    <name evidence="1" type="primary">aat</name>
    <name type="ordered locus">Pden_1270</name>
</gene>